<accession>O30189</accession>
<protein>
    <recommendedName>
        <fullName>Uncharacterized protein AF_0047</fullName>
    </recommendedName>
</protein>
<evidence type="ECO:0000255" key="1"/>
<feature type="chain" id="PRO_0000127814" description="Uncharacterized protein AF_0047">
    <location>
        <begin position="1"/>
        <end position="144"/>
    </location>
</feature>
<feature type="coiled-coil region" evidence="1">
    <location>
        <begin position="48"/>
        <end position="119"/>
    </location>
</feature>
<gene>
    <name type="ordered locus">AF_0047</name>
</gene>
<sequence length="144" mass="16896">MLERETQSLEYRKEQLENKVAWLEKRVKEKEEFKKTIHAEIKSGVEPELNKLKAKADTIFEEAKRATELRDKIVAEIKEIVEVLSKLLEASEKLEGEIEEEKKVKEKLEKETEEPKMELFKPRTISLLEAIKIWGSQTEKTGEN</sequence>
<dbReference type="EMBL" id="AE000782">
    <property type="protein sequence ID" value="AAB91185.1"/>
    <property type="molecule type" value="Genomic_DNA"/>
</dbReference>
<dbReference type="PIR" id="G69255">
    <property type="entry name" value="G69255"/>
</dbReference>
<dbReference type="RefSeq" id="WP_010877561.1">
    <property type="nucleotide sequence ID" value="NC_000917.1"/>
</dbReference>
<dbReference type="SMR" id="O30189"/>
<dbReference type="PaxDb" id="224325-AF_0047"/>
<dbReference type="EnsemblBacteria" id="AAB91185">
    <property type="protein sequence ID" value="AAB91185"/>
    <property type="gene ID" value="AF_0047"/>
</dbReference>
<dbReference type="GeneID" id="1483256"/>
<dbReference type="KEGG" id="afu:AF_0047"/>
<dbReference type="HOGENOM" id="CLU_1792013_0_0_2"/>
<dbReference type="Proteomes" id="UP000002199">
    <property type="component" value="Chromosome"/>
</dbReference>
<proteinExistence type="predicted"/>
<organism>
    <name type="scientific">Archaeoglobus fulgidus (strain ATCC 49558 / DSM 4304 / JCM 9628 / NBRC 100126 / VC-16)</name>
    <dbReference type="NCBI Taxonomy" id="224325"/>
    <lineage>
        <taxon>Archaea</taxon>
        <taxon>Methanobacteriati</taxon>
        <taxon>Methanobacteriota</taxon>
        <taxon>Archaeoglobi</taxon>
        <taxon>Archaeoglobales</taxon>
        <taxon>Archaeoglobaceae</taxon>
        <taxon>Archaeoglobus</taxon>
    </lineage>
</organism>
<keyword id="KW-0175">Coiled coil</keyword>
<keyword id="KW-1185">Reference proteome</keyword>
<name>Y047_ARCFU</name>
<reference key="1">
    <citation type="journal article" date="1997" name="Nature">
        <title>The complete genome sequence of the hyperthermophilic, sulphate-reducing archaeon Archaeoglobus fulgidus.</title>
        <authorList>
            <person name="Klenk H.-P."/>
            <person name="Clayton R.A."/>
            <person name="Tomb J.-F."/>
            <person name="White O."/>
            <person name="Nelson K.E."/>
            <person name="Ketchum K.A."/>
            <person name="Dodson R.J."/>
            <person name="Gwinn M.L."/>
            <person name="Hickey E.K."/>
            <person name="Peterson J.D."/>
            <person name="Richardson D.L."/>
            <person name="Kerlavage A.R."/>
            <person name="Graham D.E."/>
            <person name="Kyrpides N.C."/>
            <person name="Fleischmann R.D."/>
            <person name="Quackenbush J."/>
            <person name="Lee N.H."/>
            <person name="Sutton G.G."/>
            <person name="Gill S.R."/>
            <person name="Kirkness E.F."/>
            <person name="Dougherty B.A."/>
            <person name="McKenney K."/>
            <person name="Adams M.D."/>
            <person name="Loftus B.J."/>
            <person name="Peterson S.N."/>
            <person name="Reich C.I."/>
            <person name="McNeil L.K."/>
            <person name="Badger J.H."/>
            <person name="Glodek A."/>
            <person name="Zhou L."/>
            <person name="Overbeek R."/>
            <person name="Gocayne J.D."/>
            <person name="Weidman J.F."/>
            <person name="McDonald L.A."/>
            <person name="Utterback T.R."/>
            <person name="Cotton M.D."/>
            <person name="Spriggs T."/>
            <person name="Artiach P."/>
            <person name="Kaine B.P."/>
            <person name="Sykes S.M."/>
            <person name="Sadow P.W."/>
            <person name="D'Andrea K.P."/>
            <person name="Bowman C."/>
            <person name="Fujii C."/>
            <person name="Garland S.A."/>
            <person name="Mason T.M."/>
            <person name="Olsen G.J."/>
            <person name="Fraser C.M."/>
            <person name="Smith H.O."/>
            <person name="Woese C.R."/>
            <person name="Venter J.C."/>
        </authorList>
    </citation>
    <scope>NUCLEOTIDE SEQUENCE [LARGE SCALE GENOMIC DNA]</scope>
    <source>
        <strain>ATCC 49558 / DSM 4304 / JCM 9628 / NBRC 100126 / VC-16</strain>
    </source>
</reference>